<reference key="1">
    <citation type="submission" date="2007-06" db="EMBL/GenBank/DDBJ databases">
        <title>Complete sequence of chromosome of Staphylococcus aureus subsp. aureus JH1.</title>
        <authorList>
            <consortium name="US DOE Joint Genome Institute"/>
            <person name="Copeland A."/>
            <person name="Lucas S."/>
            <person name="Lapidus A."/>
            <person name="Barry K."/>
            <person name="Detter J.C."/>
            <person name="Glavina del Rio T."/>
            <person name="Hammon N."/>
            <person name="Israni S."/>
            <person name="Dalin E."/>
            <person name="Tice H."/>
            <person name="Pitluck S."/>
            <person name="Chain P."/>
            <person name="Malfatti S."/>
            <person name="Shin M."/>
            <person name="Vergez L."/>
            <person name="Schmutz J."/>
            <person name="Larimer F."/>
            <person name="Land M."/>
            <person name="Hauser L."/>
            <person name="Kyrpides N."/>
            <person name="Ivanova N."/>
            <person name="Tomasz A."/>
            <person name="Richardson P."/>
        </authorList>
    </citation>
    <scope>NUCLEOTIDE SEQUENCE [LARGE SCALE GENOMIC DNA]</scope>
    <source>
        <strain>JH1</strain>
    </source>
</reference>
<keyword id="KW-0963">Cytoplasm</keyword>
<keyword id="KW-0238">DNA-binding</keyword>
<keyword id="KW-0677">Repeat</keyword>
<keyword id="KW-0804">Transcription</keyword>
<keyword id="KW-0805">Transcription regulation</keyword>
<gene>
    <name evidence="1" type="primary">mraZ</name>
    <name type="ordered locus">SaurJH1_1262</name>
</gene>
<evidence type="ECO:0000255" key="1">
    <source>
        <dbReference type="HAMAP-Rule" id="MF_01008"/>
    </source>
</evidence>
<evidence type="ECO:0000255" key="2">
    <source>
        <dbReference type="PROSITE-ProRule" id="PRU01076"/>
    </source>
</evidence>
<protein>
    <recommendedName>
        <fullName>Transcriptional regulator MraZ</fullName>
    </recommendedName>
</protein>
<comment type="subunit">
    <text evidence="1">Forms oligomers.</text>
</comment>
<comment type="subcellular location">
    <subcellularLocation>
        <location evidence="1">Cytoplasm</location>
        <location evidence="1">Nucleoid</location>
    </subcellularLocation>
</comment>
<comment type="similarity">
    <text evidence="1">Belongs to the MraZ family.</text>
</comment>
<accession>A6U0Z8</accession>
<organism>
    <name type="scientific">Staphylococcus aureus (strain JH1)</name>
    <dbReference type="NCBI Taxonomy" id="359787"/>
    <lineage>
        <taxon>Bacteria</taxon>
        <taxon>Bacillati</taxon>
        <taxon>Bacillota</taxon>
        <taxon>Bacilli</taxon>
        <taxon>Bacillales</taxon>
        <taxon>Staphylococcaceae</taxon>
        <taxon>Staphylococcus</taxon>
    </lineage>
</organism>
<name>MRAZ_STAA2</name>
<feature type="chain" id="PRO_1000084024" description="Transcriptional regulator MraZ">
    <location>
        <begin position="1"/>
        <end position="143"/>
    </location>
</feature>
<feature type="domain" description="SpoVT-AbrB 1" evidence="2">
    <location>
        <begin position="5"/>
        <end position="47"/>
    </location>
</feature>
<feature type="domain" description="SpoVT-AbrB 2" evidence="2">
    <location>
        <begin position="76"/>
        <end position="119"/>
    </location>
</feature>
<proteinExistence type="inferred from homology"/>
<dbReference type="EMBL" id="CP000736">
    <property type="protein sequence ID" value="ABR52116.1"/>
    <property type="molecule type" value="Genomic_DNA"/>
</dbReference>
<dbReference type="SMR" id="A6U0Z8"/>
<dbReference type="KEGG" id="sah:SaurJH1_1262"/>
<dbReference type="HOGENOM" id="CLU_107907_0_5_9"/>
<dbReference type="GO" id="GO:0005737">
    <property type="term" value="C:cytoplasm"/>
    <property type="evidence" value="ECO:0007669"/>
    <property type="project" value="UniProtKB-UniRule"/>
</dbReference>
<dbReference type="GO" id="GO:0009295">
    <property type="term" value="C:nucleoid"/>
    <property type="evidence" value="ECO:0007669"/>
    <property type="project" value="UniProtKB-SubCell"/>
</dbReference>
<dbReference type="GO" id="GO:0003700">
    <property type="term" value="F:DNA-binding transcription factor activity"/>
    <property type="evidence" value="ECO:0007669"/>
    <property type="project" value="UniProtKB-UniRule"/>
</dbReference>
<dbReference type="GO" id="GO:0000976">
    <property type="term" value="F:transcription cis-regulatory region binding"/>
    <property type="evidence" value="ECO:0007669"/>
    <property type="project" value="TreeGrafter"/>
</dbReference>
<dbReference type="GO" id="GO:2000143">
    <property type="term" value="P:negative regulation of DNA-templated transcription initiation"/>
    <property type="evidence" value="ECO:0007669"/>
    <property type="project" value="TreeGrafter"/>
</dbReference>
<dbReference type="CDD" id="cd16321">
    <property type="entry name" value="MraZ_C"/>
    <property type="match status" value="1"/>
</dbReference>
<dbReference type="CDD" id="cd16320">
    <property type="entry name" value="MraZ_N"/>
    <property type="match status" value="1"/>
</dbReference>
<dbReference type="FunFam" id="3.40.1550.20:FF:000002">
    <property type="entry name" value="Transcriptional regulator MraZ"/>
    <property type="match status" value="1"/>
</dbReference>
<dbReference type="Gene3D" id="3.40.1550.20">
    <property type="entry name" value="Transcriptional regulator MraZ domain"/>
    <property type="match status" value="1"/>
</dbReference>
<dbReference type="HAMAP" id="MF_01008">
    <property type="entry name" value="MraZ"/>
    <property type="match status" value="1"/>
</dbReference>
<dbReference type="InterPro" id="IPR003444">
    <property type="entry name" value="MraZ"/>
</dbReference>
<dbReference type="InterPro" id="IPR035644">
    <property type="entry name" value="MraZ_C"/>
</dbReference>
<dbReference type="InterPro" id="IPR020603">
    <property type="entry name" value="MraZ_dom"/>
</dbReference>
<dbReference type="InterPro" id="IPR035642">
    <property type="entry name" value="MraZ_N"/>
</dbReference>
<dbReference type="InterPro" id="IPR038619">
    <property type="entry name" value="MraZ_sf"/>
</dbReference>
<dbReference type="InterPro" id="IPR007159">
    <property type="entry name" value="SpoVT-AbrB_dom"/>
</dbReference>
<dbReference type="InterPro" id="IPR037914">
    <property type="entry name" value="SpoVT-AbrB_sf"/>
</dbReference>
<dbReference type="NCBIfam" id="TIGR00242">
    <property type="entry name" value="division/cell wall cluster transcriptional repressor MraZ"/>
    <property type="match status" value="1"/>
</dbReference>
<dbReference type="PANTHER" id="PTHR34701">
    <property type="entry name" value="TRANSCRIPTIONAL REGULATOR MRAZ"/>
    <property type="match status" value="1"/>
</dbReference>
<dbReference type="PANTHER" id="PTHR34701:SF1">
    <property type="entry name" value="TRANSCRIPTIONAL REGULATOR MRAZ"/>
    <property type="match status" value="1"/>
</dbReference>
<dbReference type="Pfam" id="PF02381">
    <property type="entry name" value="MraZ"/>
    <property type="match status" value="2"/>
</dbReference>
<dbReference type="SUPFAM" id="SSF89447">
    <property type="entry name" value="AbrB/MazE/MraZ-like"/>
    <property type="match status" value="1"/>
</dbReference>
<dbReference type="PROSITE" id="PS51740">
    <property type="entry name" value="SPOVT_ABRB"/>
    <property type="match status" value="2"/>
</dbReference>
<sequence length="143" mass="17238">MFMGEYDHQLDTKGRMIIPSKFRYDLNERFIITRGLDKCLFGYTLDEWQQIEEKMKTLPMTKKDARKFMRMFFSGAVEVELDKQGRINIPQNLRKYANLTKECTVIGVSNRIEIWDRETWNDFYEESEESFEDIAEDLIDFDF</sequence>